<feature type="chain" id="PRO_1000121109" description="DNA replication and repair protein RecF">
    <location>
        <begin position="1"/>
        <end position="357"/>
    </location>
</feature>
<feature type="binding site" evidence="1">
    <location>
        <begin position="30"/>
        <end position="37"/>
    </location>
    <ligand>
        <name>ATP</name>
        <dbReference type="ChEBI" id="CHEBI:30616"/>
    </ligand>
</feature>
<evidence type="ECO:0000255" key="1">
    <source>
        <dbReference type="HAMAP-Rule" id="MF_00365"/>
    </source>
</evidence>
<comment type="function">
    <text evidence="1">The RecF protein is involved in DNA metabolism; it is required for DNA replication and normal SOS inducibility. RecF binds preferentially to single-stranded, linear DNA. It also seems to bind ATP.</text>
</comment>
<comment type="subcellular location">
    <subcellularLocation>
        <location evidence="1">Cytoplasm</location>
    </subcellularLocation>
</comment>
<comment type="similarity">
    <text evidence="1">Belongs to the RecF family.</text>
</comment>
<keyword id="KW-0067">ATP-binding</keyword>
<keyword id="KW-0963">Cytoplasm</keyword>
<keyword id="KW-0227">DNA damage</keyword>
<keyword id="KW-0234">DNA repair</keyword>
<keyword id="KW-0235">DNA replication</keyword>
<keyword id="KW-0238">DNA-binding</keyword>
<keyword id="KW-0547">Nucleotide-binding</keyword>
<keyword id="KW-0742">SOS response</keyword>
<gene>
    <name evidence="1" type="primary">recF</name>
    <name type="ordered locus">ECH74115_5128</name>
</gene>
<proteinExistence type="inferred from homology"/>
<dbReference type="EMBL" id="CP001164">
    <property type="protein sequence ID" value="ACI36328.1"/>
    <property type="molecule type" value="Genomic_DNA"/>
</dbReference>
<dbReference type="RefSeq" id="WP_000060112.1">
    <property type="nucleotide sequence ID" value="NC_011353.1"/>
</dbReference>
<dbReference type="SMR" id="B5YXA2"/>
<dbReference type="GeneID" id="93778441"/>
<dbReference type="KEGG" id="ecf:ECH74115_5128"/>
<dbReference type="HOGENOM" id="CLU_040267_0_0_6"/>
<dbReference type="GO" id="GO:0005737">
    <property type="term" value="C:cytoplasm"/>
    <property type="evidence" value="ECO:0007669"/>
    <property type="project" value="UniProtKB-SubCell"/>
</dbReference>
<dbReference type="GO" id="GO:0005524">
    <property type="term" value="F:ATP binding"/>
    <property type="evidence" value="ECO:0007669"/>
    <property type="project" value="UniProtKB-UniRule"/>
</dbReference>
<dbReference type="GO" id="GO:0003697">
    <property type="term" value="F:single-stranded DNA binding"/>
    <property type="evidence" value="ECO:0007669"/>
    <property type="project" value="UniProtKB-UniRule"/>
</dbReference>
<dbReference type="GO" id="GO:0006260">
    <property type="term" value="P:DNA replication"/>
    <property type="evidence" value="ECO:0007669"/>
    <property type="project" value="UniProtKB-UniRule"/>
</dbReference>
<dbReference type="GO" id="GO:0000731">
    <property type="term" value="P:DNA synthesis involved in DNA repair"/>
    <property type="evidence" value="ECO:0007669"/>
    <property type="project" value="TreeGrafter"/>
</dbReference>
<dbReference type="GO" id="GO:0006302">
    <property type="term" value="P:double-strand break repair"/>
    <property type="evidence" value="ECO:0007669"/>
    <property type="project" value="TreeGrafter"/>
</dbReference>
<dbReference type="GO" id="GO:0009432">
    <property type="term" value="P:SOS response"/>
    <property type="evidence" value="ECO:0007669"/>
    <property type="project" value="UniProtKB-UniRule"/>
</dbReference>
<dbReference type="FunFam" id="1.20.1050.90:FF:000001">
    <property type="entry name" value="DNA replication and repair protein RecF"/>
    <property type="match status" value="1"/>
</dbReference>
<dbReference type="Gene3D" id="3.40.50.300">
    <property type="entry name" value="P-loop containing nucleotide triphosphate hydrolases"/>
    <property type="match status" value="1"/>
</dbReference>
<dbReference type="Gene3D" id="1.20.1050.90">
    <property type="entry name" value="RecF/RecN/SMC, N-terminal domain"/>
    <property type="match status" value="1"/>
</dbReference>
<dbReference type="HAMAP" id="MF_00365">
    <property type="entry name" value="RecF"/>
    <property type="match status" value="1"/>
</dbReference>
<dbReference type="InterPro" id="IPR001238">
    <property type="entry name" value="DNA-binding_RecF"/>
</dbReference>
<dbReference type="InterPro" id="IPR018078">
    <property type="entry name" value="DNA-binding_RecF_CS"/>
</dbReference>
<dbReference type="InterPro" id="IPR027417">
    <property type="entry name" value="P-loop_NTPase"/>
</dbReference>
<dbReference type="InterPro" id="IPR003395">
    <property type="entry name" value="RecF/RecN/SMC_N"/>
</dbReference>
<dbReference type="InterPro" id="IPR042174">
    <property type="entry name" value="RecF_2"/>
</dbReference>
<dbReference type="NCBIfam" id="TIGR00611">
    <property type="entry name" value="recf"/>
    <property type="match status" value="1"/>
</dbReference>
<dbReference type="PANTHER" id="PTHR32182">
    <property type="entry name" value="DNA REPLICATION AND REPAIR PROTEIN RECF"/>
    <property type="match status" value="1"/>
</dbReference>
<dbReference type="PANTHER" id="PTHR32182:SF0">
    <property type="entry name" value="DNA REPLICATION AND REPAIR PROTEIN RECF"/>
    <property type="match status" value="1"/>
</dbReference>
<dbReference type="Pfam" id="PF02463">
    <property type="entry name" value="SMC_N"/>
    <property type="match status" value="1"/>
</dbReference>
<dbReference type="SUPFAM" id="SSF52540">
    <property type="entry name" value="P-loop containing nucleoside triphosphate hydrolases"/>
    <property type="match status" value="1"/>
</dbReference>
<dbReference type="PROSITE" id="PS00617">
    <property type="entry name" value="RECF_1"/>
    <property type="match status" value="1"/>
</dbReference>
<dbReference type="PROSITE" id="PS00618">
    <property type="entry name" value="RECF_2"/>
    <property type="match status" value="1"/>
</dbReference>
<reference key="1">
    <citation type="journal article" date="2011" name="Proc. Natl. Acad. Sci. U.S.A.">
        <title>Genomic anatomy of Escherichia coli O157:H7 outbreaks.</title>
        <authorList>
            <person name="Eppinger M."/>
            <person name="Mammel M.K."/>
            <person name="Leclerc J.E."/>
            <person name="Ravel J."/>
            <person name="Cebula T.A."/>
        </authorList>
    </citation>
    <scope>NUCLEOTIDE SEQUENCE [LARGE SCALE GENOMIC DNA]</scope>
    <source>
        <strain>EC4115 / EHEC</strain>
    </source>
</reference>
<name>RECF_ECO5E</name>
<accession>B5YXA2</accession>
<sequence length="357" mass="40514">MSLTRLLIRDFRNIETADLALSPGFNFLVGANGSGKTSVLEAIYTLGHGRAFRSLQIGRVIRHEQEAFVLHGRLQGEERETAIGLTKDKQGDSKVRIDGTDGHKVAELAHLMPMQLITPEGFTLLNGGPKYRRAFLDWGCFHNEPGFFTAWSNLKRLLKQRNAALRQVTRYEQLRPWDKELIPLAEQISTWRAEYSAGIAADMADTCKQFLPEFSLTFSFQRGWEKETEYAEVLERNFERDRQLTYTAHGPHKADLRIRADGAPVEDTLSRGQLKLLMCALRLAQGEFLTRESGRRCLYLIDDFASELDDERRGLLASRLKATQSQVFVSAISAEHVIDMSDENSKMFTVEKGKITD</sequence>
<protein>
    <recommendedName>
        <fullName evidence="1">DNA replication and repair protein RecF</fullName>
    </recommendedName>
</protein>
<organism>
    <name type="scientific">Escherichia coli O157:H7 (strain EC4115 / EHEC)</name>
    <dbReference type="NCBI Taxonomy" id="444450"/>
    <lineage>
        <taxon>Bacteria</taxon>
        <taxon>Pseudomonadati</taxon>
        <taxon>Pseudomonadota</taxon>
        <taxon>Gammaproteobacteria</taxon>
        <taxon>Enterobacterales</taxon>
        <taxon>Enterobacteriaceae</taxon>
        <taxon>Escherichia</taxon>
    </lineage>
</organism>